<keyword id="KW-0227">DNA damage</keyword>
<keyword id="KW-0234">DNA repair</keyword>
<keyword id="KW-0235">DNA replication</keyword>
<keyword id="KW-0436">Ligase</keyword>
<keyword id="KW-0460">Magnesium</keyword>
<keyword id="KW-0464">Manganese</keyword>
<keyword id="KW-0479">Metal-binding</keyword>
<keyword id="KW-0520">NAD</keyword>
<keyword id="KW-1185">Reference proteome</keyword>
<keyword id="KW-0862">Zinc</keyword>
<accession>A5EVZ5</accession>
<dbReference type="EC" id="6.5.1.2" evidence="1"/>
<dbReference type="EMBL" id="CP000513">
    <property type="protein sequence ID" value="ABQ13642.1"/>
    <property type="molecule type" value="Genomic_DNA"/>
</dbReference>
<dbReference type="RefSeq" id="WP_012030730.1">
    <property type="nucleotide sequence ID" value="NC_009446.1"/>
</dbReference>
<dbReference type="SMR" id="A5EVZ5"/>
<dbReference type="STRING" id="246195.DNO_0389"/>
<dbReference type="KEGG" id="dno:DNO_0389"/>
<dbReference type="eggNOG" id="COG0272">
    <property type="taxonomic scope" value="Bacteria"/>
</dbReference>
<dbReference type="HOGENOM" id="CLU_007764_2_1_6"/>
<dbReference type="OrthoDB" id="9759736at2"/>
<dbReference type="Proteomes" id="UP000000248">
    <property type="component" value="Chromosome"/>
</dbReference>
<dbReference type="GO" id="GO:0005829">
    <property type="term" value="C:cytosol"/>
    <property type="evidence" value="ECO:0007669"/>
    <property type="project" value="TreeGrafter"/>
</dbReference>
<dbReference type="GO" id="GO:0003677">
    <property type="term" value="F:DNA binding"/>
    <property type="evidence" value="ECO:0007669"/>
    <property type="project" value="InterPro"/>
</dbReference>
<dbReference type="GO" id="GO:0003911">
    <property type="term" value="F:DNA ligase (NAD+) activity"/>
    <property type="evidence" value="ECO:0007669"/>
    <property type="project" value="UniProtKB-UniRule"/>
</dbReference>
<dbReference type="GO" id="GO:0046872">
    <property type="term" value="F:metal ion binding"/>
    <property type="evidence" value="ECO:0007669"/>
    <property type="project" value="UniProtKB-KW"/>
</dbReference>
<dbReference type="GO" id="GO:0006281">
    <property type="term" value="P:DNA repair"/>
    <property type="evidence" value="ECO:0007669"/>
    <property type="project" value="UniProtKB-KW"/>
</dbReference>
<dbReference type="GO" id="GO:0006260">
    <property type="term" value="P:DNA replication"/>
    <property type="evidence" value="ECO:0007669"/>
    <property type="project" value="UniProtKB-KW"/>
</dbReference>
<dbReference type="CDD" id="cd17748">
    <property type="entry name" value="BRCT_DNA_ligase_like"/>
    <property type="match status" value="1"/>
</dbReference>
<dbReference type="CDD" id="cd00114">
    <property type="entry name" value="LIGANc"/>
    <property type="match status" value="1"/>
</dbReference>
<dbReference type="FunFam" id="1.10.150.20:FF:000006">
    <property type="entry name" value="DNA ligase"/>
    <property type="match status" value="1"/>
</dbReference>
<dbReference type="FunFam" id="1.10.150.20:FF:000007">
    <property type="entry name" value="DNA ligase"/>
    <property type="match status" value="1"/>
</dbReference>
<dbReference type="FunFam" id="2.40.50.140:FF:000012">
    <property type="entry name" value="DNA ligase"/>
    <property type="match status" value="1"/>
</dbReference>
<dbReference type="FunFam" id="3.30.470.30:FF:000001">
    <property type="entry name" value="DNA ligase"/>
    <property type="match status" value="1"/>
</dbReference>
<dbReference type="Gene3D" id="6.20.10.30">
    <property type="match status" value="1"/>
</dbReference>
<dbReference type="Gene3D" id="1.10.150.20">
    <property type="entry name" value="5' to 3' exonuclease, C-terminal subdomain"/>
    <property type="match status" value="2"/>
</dbReference>
<dbReference type="Gene3D" id="3.40.50.10190">
    <property type="entry name" value="BRCT domain"/>
    <property type="match status" value="1"/>
</dbReference>
<dbReference type="Gene3D" id="3.30.470.30">
    <property type="entry name" value="DNA ligase/mRNA capping enzyme"/>
    <property type="match status" value="1"/>
</dbReference>
<dbReference type="Gene3D" id="1.10.287.610">
    <property type="entry name" value="Helix hairpin bin"/>
    <property type="match status" value="1"/>
</dbReference>
<dbReference type="Gene3D" id="2.40.50.140">
    <property type="entry name" value="Nucleic acid-binding proteins"/>
    <property type="match status" value="1"/>
</dbReference>
<dbReference type="HAMAP" id="MF_01588">
    <property type="entry name" value="DNA_ligase_A"/>
    <property type="match status" value="1"/>
</dbReference>
<dbReference type="InterPro" id="IPR001357">
    <property type="entry name" value="BRCT_dom"/>
</dbReference>
<dbReference type="InterPro" id="IPR036420">
    <property type="entry name" value="BRCT_dom_sf"/>
</dbReference>
<dbReference type="InterPro" id="IPR041663">
    <property type="entry name" value="DisA/LigA_HHH"/>
</dbReference>
<dbReference type="InterPro" id="IPR001679">
    <property type="entry name" value="DNA_ligase"/>
</dbReference>
<dbReference type="InterPro" id="IPR018239">
    <property type="entry name" value="DNA_ligase_AS"/>
</dbReference>
<dbReference type="InterPro" id="IPR033136">
    <property type="entry name" value="DNA_ligase_CS"/>
</dbReference>
<dbReference type="InterPro" id="IPR013839">
    <property type="entry name" value="DNAligase_adenylation"/>
</dbReference>
<dbReference type="InterPro" id="IPR013840">
    <property type="entry name" value="DNAligase_N"/>
</dbReference>
<dbReference type="InterPro" id="IPR003583">
    <property type="entry name" value="Hlx-hairpin-Hlx_DNA-bd_motif"/>
</dbReference>
<dbReference type="InterPro" id="IPR012340">
    <property type="entry name" value="NA-bd_OB-fold"/>
</dbReference>
<dbReference type="InterPro" id="IPR004150">
    <property type="entry name" value="NAD_DNA_ligase_OB"/>
</dbReference>
<dbReference type="InterPro" id="IPR010994">
    <property type="entry name" value="RuvA_2-like"/>
</dbReference>
<dbReference type="InterPro" id="IPR004149">
    <property type="entry name" value="Znf_DNAligase_C4"/>
</dbReference>
<dbReference type="NCBIfam" id="TIGR00575">
    <property type="entry name" value="dnlj"/>
    <property type="match status" value="1"/>
</dbReference>
<dbReference type="NCBIfam" id="NF005932">
    <property type="entry name" value="PRK07956.1"/>
    <property type="match status" value="1"/>
</dbReference>
<dbReference type="PANTHER" id="PTHR23389">
    <property type="entry name" value="CHROMOSOME TRANSMISSION FIDELITY FACTOR 18"/>
    <property type="match status" value="1"/>
</dbReference>
<dbReference type="PANTHER" id="PTHR23389:SF9">
    <property type="entry name" value="DNA LIGASE"/>
    <property type="match status" value="1"/>
</dbReference>
<dbReference type="Pfam" id="PF00533">
    <property type="entry name" value="BRCT"/>
    <property type="match status" value="1"/>
</dbReference>
<dbReference type="Pfam" id="PF01653">
    <property type="entry name" value="DNA_ligase_aden"/>
    <property type="match status" value="1"/>
</dbReference>
<dbReference type="Pfam" id="PF03120">
    <property type="entry name" value="DNA_ligase_OB"/>
    <property type="match status" value="1"/>
</dbReference>
<dbReference type="Pfam" id="PF03119">
    <property type="entry name" value="DNA_ligase_ZBD"/>
    <property type="match status" value="1"/>
</dbReference>
<dbReference type="Pfam" id="PF12826">
    <property type="entry name" value="HHH_2"/>
    <property type="match status" value="1"/>
</dbReference>
<dbReference type="Pfam" id="PF14520">
    <property type="entry name" value="HHH_5"/>
    <property type="match status" value="1"/>
</dbReference>
<dbReference type="PIRSF" id="PIRSF001604">
    <property type="entry name" value="LigA"/>
    <property type="match status" value="1"/>
</dbReference>
<dbReference type="SMART" id="SM00292">
    <property type="entry name" value="BRCT"/>
    <property type="match status" value="1"/>
</dbReference>
<dbReference type="SMART" id="SM00278">
    <property type="entry name" value="HhH1"/>
    <property type="match status" value="4"/>
</dbReference>
<dbReference type="SMART" id="SM00532">
    <property type="entry name" value="LIGANc"/>
    <property type="match status" value="1"/>
</dbReference>
<dbReference type="SUPFAM" id="SSF52113">
    <property type="entry name" value="BRCT domain"/>
    <property type="match status" value="1"/>
</dbReference>
<dbReference type="SUPFAM" id="SSF56091">
    <property type="entry name" value="DNA ligase/mRNA capping enzyme, catalytic domain"/>
    <property type="match status" value="1"/>
</dbReference>
<dbReference type="SUPFAM" id="SSF50249">
    <property type="entry name" value="Nucleic acid-binding proteins"/>
    <property type="match status" value="1"/>
</dbReference>
<dbReference type="SUPFAM" id="SSF47781">
    <property type="entry name" value="RuvA domain 2-like"/>
    <property type="match status" value="1"/>
</dbReference>
<dbReference type="PROSITE" id="PS50172">
    <property type="entry name" value="BRCT"/>
    <property type="match status" value="1"/>
</dbReference>
<dbReference type="PROSITE" id="PS01055">
    <property type="entry name" value="DNA_LIGASE_N1"/>
    <property type="match status" value="1"/>
</dbReference>
<dbReference type="PROSITE" id="PS01056">
    <property type="entry name" value="DNA_LIGASE_N2"/>
    <property type="match status" value="1"/>
</dbReference>
<feature type="chain" id="PRO_0000313222" description="DNA ligase">
    <location>
        <begin position="1"/>
        <end position="678"/>
    </location>
</feature>
<feature type="domain" description="BRCT" evidence="1">
    <location>
        <begin position="595"/>
        <end position="678"/>
    </location>
</feature>
<feature type="active site" description="N6-AMP-lysine intermediate" evidence="1">
    <location>
        <position position="119"/>
    </location>
</feature>
<feature type="binding site" evidence="1">
    <location>
        <begin position="36"/>
        <end position="40"/>
    </location>
    <ligand>
        <name>NAD(+)</name>
        <dbReference type="ChEBI" id="CHEBI:57540"/>
    </ligand>
</feature>
<feature type="binding site" evidence="1">
    <location>
        <begin position="85"/>
        <end position="86"/>
    </location>
    <ligand>
        <name>NAD(+)</name>
        <dbReference type="ChEBI" id="CHEBI:57540"/>
    </ligand>
</feature>
<feature type="binding site" evidence="1">
    <location>
        <position position="117"/>
    </location>
    <ligand>
        <name>NAD(+)</name>
        <dbReference type="ChEBI" id="CHEBI:57540"/>
    </ligand>
</feature>
<feature type="binding site" evidence="1">
    <location>
        <position position="140"/>
    </location>
    <ligand>
        <name>NAD(+)</name>
        <dbReference type="ChEBI" id="CHEBI:57540"/>
    </ligand>
</feature>
<feature type="binding site" evidence="1">
    <location>
        <position position="177"/>
    </location>
    <ligand>
        <name>NAD(+)</name>
        <dbReference type="ChEBI" id="CHEBI:57540"/>
    </ligand>
</feature>
<feature type="binding site" evidence="1">
    <location>
        <position position="294"/>
    </location>
    <ligand>
        <name>NAD(+)</name>
        <dbReference type="ChEBI" id="CHEBI:57540"/>
    </ligand>
</feature>
<feature type="binding site" evidence="1">
    <location>
        <position position="318"/>
    </location>
    <ligand>
        <name>NAD(+)</name>
        <dbReference type="ChEBI" id="CHEBI:57540"/>
    </ligand>
</feature>
<feature type="binding site" evidence="1">
    <location>
        <position position="412"/>
    </location>
    <ligand>
        <name>Zn(2+)</name>
        <dbReference type="ChEBI" id="CHEBI:29105"/>
    </ligand>
</feature>
<feature type="binding site" evidence="1">
    <location>
        <position position="415"/>
    </location>
    <ligand>
        <name>Zn(2+)</name>
        <dbReference type="ChEBI" id="CHEBI:29105"/>
    </ligand>
</feature>
<feature type="binding site" evidence="1">
    <location>
        <position position="430"/>
    </location>
    <ligand>
        <name>Zn(2+)</name>
        <dbReference type="ChEBI" id="CHEBI:29105"/>
    </ligand>
</feature>
<feature type="binding site" evidence="1">
    <location>
        <position position="436"/>
    </location>
    <ligand>
        <name>Zn(2+)</name>
        <dbReference type="ChEBI" id="CHEBI:29105"/>
    </ligand>
</feature>
<proteinExistence type="inferred from homology"/>
<evidence type="ECO:0000255" key="1">
    <source>
        <dbReference type="HAMAP-Rule" id="MF_01588"/>
    </source>
</evidence>
<name>DNLJ_DICNV</name>
<comment type="function">
    <text evidence="1">DNA ligase that catalyzes the formation of phosphodiester linkages between 5'-phosphoryl and 3'-hydroxyl groups in double-stranded DNA using NAD as a coenzyme and as the energy source for the reaction. It is essential for DNA replication and repair of damaged DNA.</text>
</comment>
<comment type="catalytic activity">
    <reaction evidence="1">
        <text>NAD(+) + (deoxyribonucleotide)n-3'-hydroxyl + 5'-phospho-(deoxyribonucleotide)m = (deoxyribonucleotide)n+m + AMP + beta-nicotinamide D-nucleotide.</text>
        <dbReference type="EC" id="6.5.1.2"/>
    </reaction>
</comment>
<comment type="cofactor">
    <cofactor evidence="1">
        <name>Mg(2+)</name>
        <dbReference type="ChEBI" id="CHEBI:18420"/>
    </cofactor>
    <cofactor evidence="1">
        <name>Mn(2+)</name>
        <dbReference type="ChEBI" id="CHEBI:29035"/>
    </cofactor>
</comment>
<comment type="similarity">
    <text evidence="1">Belongs to the NAD-dependent DNA ligase family. LigA subfamily.</text>
</comment>
<sequence length="678" mass="74233">MAQNSSLIAAELEALRQTIRAHEYAYYVLEAPNIADSEFDALMQKLRALEAASGLPIPADSPTQRVGGKADNRFRNVAHHIAMLSLDNVFNADEFADFYRRLQEQLSPTTAISLIAEPKFDGLAINLRYENGILQRASTRGDGITGEDVTQNVRTISTIPLRLNTHTPPDVIEIRGEIYMPKKAFYALNEQAAANGEKIFANPRNAASGSLRQLDPRITARRQLAFFAYGYGEITNYQLPETYEALLEQYRAWHIPVCSLHQKAATLPEALAAYQQFAKQREQLPFDIDGVVFKVNRFADQQRAGFLARAPRWAIAWKFPALEKTTRIEAIELQVGRTGAVTPVARLQPVTIAGVVVRSASLHNAREIARKDIRVGDTIFIRRAGDVIPEVVSVVLEKRLPDAPVFAMPEHCPVCAAAIVQNEDEAVARCSGGLHCPAQRVAALIHFASREALDIRGLGEKLIQQLVAQEFVRTPADLFCLTADDWASLPRMGKKSAHNVMTAIDAAKKTTLARFIYALGIRGVGSVNAQALAAHFGDLAAFMAADRAALQEIEGIGDVVAADIEHFFADEDNRAVIAAIVAAGVHWSTELTKKIIDAPLLGKTVVITGTLPSLSRAEAQKRLETLGAKVTSQVSRQTDFLLLGADAGSKLARAQAFSVPIIDEAQLQTWWQHYGNAV</sequence>
<gene>
    <name evidence="1" type="primary">ligA</name>
    <name type="ordered locus">DNO_0389</name>
</gene>
<protein>
    <recommendedName>
        <fullName evidence="1">DNA ligase</fullName>
        <ecNumber evidence="1">6.5.1.2</ecNumber>
    </recommendedName>
    <alternativeName>
        <fullName evidence="1">Polydeoxyribonucleotide synthase [NAD(+)]</fullName>
    </alternativeName>
</protein>
<organism>
    <name type="scientific">Dichelobacter nodosus (strain VCS1703A)</name>
    <dbReference type="NCBI Taxonomy" id="246195"/>
    <lineage>
        <taxon>Bacteria</taxon>
        <taxon>Pseudomonadati</taxon>
        <taxon>Pseudomonadota</taxon>
        <taxon>Gammaproteobacteria</taxon>
        <taxon>Cardiobacteriales</taxon>
        <taxon>Cardiobacteriaceae</taxon>
        <taxon>Dichelobacter</taxon>
    </lineage>
</organism>
<reference key="1">
    <citation type="journal article" date="2007" name="Nat. Biotechnol.">
        <title>Genome sequence and identification of candidate vaccine antigens from the animal pathogen Dichelobacter nodosus.</title>
        <authorList>
            <person name="Myers G.S.A."/>
            <person name="Parker D."/>
            <person name="Al-Hasani K."/>
            <person name="Kennan R.M."/>
            <person name="Seemann T."/>
            <person name="Ren Q."/>
            <person name="Badger J.H."/>
            <person name="Selengut J.D."/>
            <person name="Deboy R.T."/>
            <person name="Tettelin H."/>
            <person name="Boyce J.D."/>
            <person name="McCarl V.P."/>
            <person name="Han X."/>
            <person name="Nelson W.C."/>
            <person name="Madupu R."/>
            <person name="Mohamoud Y."/>
            <person name="Holley T."/>
            <person name="Fedorova N."/>
            <person name="Khouri H."/>
            <person name="Bottomley S.P."/>
            <person name="Whittington R.J."/>
            <person name="Adler B."/>
            <person name="Songer J.G."/>
            <person name="Rood J.I."/>
            <person name="Paulsen I.T."/>
        </authorList>
    </citation>
    <scope>NUCLEOTIDE SEQUENCE [LARGE SCALE GENOMIC DNA]</scope>
    <source>
        <strain>VCS1703A</strain>
    </source>
</reference>